<accession>A9LYX4</accession>
<dbReference type="EC" id="2.1.2.1" evidence="1"/>
<dbReference type="EMBL" id="CP000381">
    <property type="protein sequence ID" value="ABX73151.1"/>
    <property type="molecule type" value="Genomic_DNA"/>
</dbReference>
<dbReference type="RefSeq" id="WP_012221593.1">
    <property type="nucleotide sequence ID" value="NC_010120.1"/>
</dbReference>
<dbReference type="SMR" id="A9LYX4"/>
<dbReference type="KEGG" id="nmn:NMCC_0971"/>
<dbReference type="HOGENOM" id="CLU_022477_2_1_4"/>
<dbReference type="UniPathway" id="UPA00193"/>
<dbReference type="UniPathway" id="UPA00288">
    <property type="reaction ID" value="UER01023"/>
</dbReference>
<dbReference type="Proteomes" id="UP000001177">
    <property type="component" value="Chromosome"/>
</dbReference>
<dbReference type="GO" id="GO:0005829">
    <property type="term" value="C:cytosol"/>
    <property type="evidence" value="ECO:0007669"/>
    <property type="project" value="TreeGrafter"/>
</dbReference>
<dbReference type="GO" id="GO:0004372">
    <property type="term" value="F:glycine hydroxymethyltransferase activity"/>
    <property type="evidence" value="ECO:0007669"/>
    <property type="project" value="UniProtKB-UniRule"/>
</dbReference>
<dbReference type="GO" id="GO:0030170">
    <property type="term" value="F:pyridoxal phosphate binding"/>
    <property type="evidence" value="ECO:0007669"/>
    <property type="project" value="UniProtKB-UniRule"/>
</dbReference>
<dbReference type="GO" id="GO:0019264">
    <property type="term" value="P:glycine biosynthetic process from serine"/>
    <property type="evidence" value="ECO:0007669"/>
    <property type="project" value="UniProtKB-UniRule"/>
</dbReference>
<dbReference type="GO" id="GO:0035999">
    <property type="term" value="P:tetrahydrofolate interconversion"/>
    <property type="evidence" value="ECO:0007669"/>
    <property type="project" value="UniProtKB-UniRule"/>
</dbReference>
<dbReference type="CDD" id="cd00378">
    <property type="entry name" value="SHMT"/>
    <property type="match status" value="1"/>
</dbReference>
<dbReference type="FunFam" id="3.40.640.10:FF:000001">
    <property type="entry name" value="Serine hydroxymethyltransferase"/>
    <property type="match status" value="1"/>
</dbReference>
<dbReference type="FunFam" id="3.90.1150.10:FF:000003">
    <property type="entry name" value="Serine hydroxymethyltransferase"/>
    <property type="match status" value="1"/>
</dbReference>
<dbReference type="Gene3D" id="3.90.1150.10">
    <property type="entry name" value="Aspartate Aminotransferase, domain 1"/>
    <property type="match status" value="1"/>
</dbReference>
<dbReference type="Gene3D" id="3.40.640.10">
    <property type="entry name" value="Type I PLP-dependent aspartate aminotransferase-like (Major domain)"/>
    <property type="match status" value="1"/>
</dbReference>
<dbReference type="HAMAP" id="MF_00051">
    <property type="entry name" value="SHMT"/>
    <property type="match status" value="1"/>
</dbReference>
<dbReference type="InterPro" id="IPR015424">
    <property type="entry name" value="PyrdxlP-dep_Trfase"/>
</dbReference>
<dbReference type="InterPro" id="IPR015421">
    <property type="entry name" value="PyrdxlP-dep_Trfase_major"/>
</dbReference>
<dbReference type="InterPro" id="IPR015422">
    <property type="entry name" value="PyrdxlP-dep_Trfase_small"/>
</dbReference>
<dbReference type="InterPro" id="IPR001085">
    <property type="entry name" value="Ser_HO-MeTrfase"/>
</dbReference>
<dbReference type="InterPro" id="IPR049943">
    <property type="entry name" value="Ser_HO-MeTrfase-like"/>
</dbReference>
<dbReference type="InterPro" id="IPR019798">
    <property type="entry name" value="Ser_HO-MeTrfase_PLP_BS"/>
</dbReference>
<dbReference type="InterPro" id="IPR039429">
    <property type="entry name" value="SHMT-like_dom"/>
</dbReference>
<dbReference type="NCBIfam" id="NF000586">
    <property type="entry name" value="PRK00011.1"/>
    <property type="match status" value="1"/>
</dbReference>
<dbReference type="PANTHER" id="PTHR11680">
    <property type="entry name" value="SERINE HYDROXYMETHYLTRANSFERASE"/>
    <property type="match status" value="1"/>
</dbReference>
<dbReference type="PANTHER" id="PTHR11680:SF50">
    <property type="entry name" value="SERINE HYDROXYMETHYLTRANSFERASE"/>
    <property type="match status" value="1"/>
</dbReference>
<dbReference type="Pfam" id="PF00464">
    <property type="entry name" value="SHMT"/>
    <property type="match status" value="1"/>
</dbReference>
<dbReference type="PIRSF" id="PIRSF000412">
    <property type="entry name" value="SHMT"/>
    <property type="match status" value="1"/>
</dbReference>
<dbReference type="SUPFAM" id="SSF53383">
    <property type="entry name" value="PLP-dependent transferases"/>
    <property type="match status" value="1"/>
</dbReference>
<dbReference type="PROSITE" id="PS00096">
    <property type="entry name" value="SHMT"/>
    <property type="match status" value="1"/>
</dbReference>
<keyword id="KW-0028">Amino-acid biosynthesis</keyword>
<keyword id="KW-0963">Cytoplasm</keyword>
<keyword id="KW-0554">One-carbon metabolism</keyword>
<keyword id="KW-0663">Pyridoxal phosphate</keyword>
<keyword id="KW-0808">Transferase</keyword>
<feature type="chain" id="PRO_1000074901" description="Serine hydroxymethyltransferase">
    <location>
        <begin position="1"/>
        <end position="416"/>
    </location>
</feature>
<feature type="binding site" evidence="1">
    <location>
        <position position="121"/>
    </location>
    <ligand>
        <name>(6S)-5,6,7,8-tetrahydrofolate</name>
        <dbReference type="ChEBI" id="CHEBI:57453"/>
    </ligand>
</feature>
<feature type="binding site" evidence="1">
    <location>
        <begin position="125"/>
        <end position="127"/>
    </location>
    <ligand>
        <name>(6S)-5,6,7,8-tetrahydrofolate</name>
        <dbReference type="ChEBI" id="CHEBI:57453"/>
    </ligand>
</feature>
<feature type="site" description="Plays an important role in substrate specificity" evidence="1">
    <location>
        <position position="228"/>
    </location>
</feature>
<feature type="modified residue" description="N6-(pyridoxal phosphate)lysine" evidence="1">
    <location>
        <position position="229"/>
    </location>
</feature>
<organism>
    <name type="scientific">Neisseria meningitidis serogroup C (strain 053442)</name>
    <dbReference type="NCBI Taxonomy" id="374833"/>
    <lineage>
        <taxon>Bacteria</taxon>
        <taxon>Pseudomonadati</taxon>
        <taxon>Pseudomonadota</taxon>
        <taxon>Betaproteobacteria</taxon>
        <taxon>Neisseriales</taxon>
        <taxon>Neisseriaceae</taxon>
        <taxon>Neisseria</taxon>
    </lineage>
</organism>
<protein>
    <recommendedName>
        <fullName evidence="1">Serine hydroxymethyltransferase</fullName>
        <shortName evidence="1">SHMT</shortName>
        <shortName evidence="1">Serine methylase</shortName>
        <ecNumber evidence="1">2.1.2.1</ecNumber>
    </recommendedName>
</protein>
<proteinExistence type="inferred from homology"/>
<name>GLYA_NEIM0</name>
<evidence type="ECO:0000255" key="1">
    <source>
        <dbReference type="HAMAP-Rule" id="MF_00051"/>
    </source>
</evidence>
<comment type="function">
    <text evidence="1">Catalyzes the reversible interconversion of serine and glycine with tetrahydrofolate (THF) serving as the one-carbon carrier. This reaction serves as the major source of one-carbon groups required for the biosynthesis of purines, thymidylate, methionine, and other important biomolecules. Also exhibits THF-independent aldolase activity toward beta-hydroxyamino acids, producing glycine and aldehydes, via a retro-aldol mechanism.</text>
</comment>
<comment type="catalytic activity">
    <reaction evidence="1">
        <text>(6R)-5,10-methylene-5,6,7,8-tetrahydrofolate + glycine + H2O = (6S)-5,6,7,8-tetrahydrofolate + L-serine</text>
        <dbReference type="Rhea" id="RHEA:15481"/>
        <dbReference type="ChEBI" id="CHEBI:15377"/>
        <dbReference type="ChEBI" id="CHEBI:15636"/>
        <dbReference type="ChEBI" id="CHEBI:33384"/>
        <dbReference type="ChEBI" id="CHEBI:57305"/>
        <dbReference type="ChEBI" id="CHEBI:57453"/>
        <dbReference type="EC" id="2.1.2.1"/>
    </reaction>
</comment>
<comment type="cofactor">
    <cofactor evidence="1">
        <name>pyridoxal 5'-phosphate</name>
        <dbReference type="ChEBI" id="CHEBI:597326"/>
    </cofactor>
</comment>
<comment type="pathway">
    <text evidence="1">One-carbon metabolism; tetrahydrofolate interconversion.</text>
</comment>
<comment type="pathway">
    <text evidence="1">Amino-acid biosynthesis; glycine biosynthesis; glycine from L-serine: step 1/1.</text>
</comment>
<comment type="subunit">
    <text evidence="1">Homodimer.</text>
</comment>
<comment type="subcellular location">
    <subcellularLocation>
        <location evidence="1">Cytoplasm</location>
    </subcellularLocation>
</comment>
<comment type="similarity">
    <text evidence="1">Belongs to the SHMT family.</text>
</comment>
<gene>
    <name evidence="1" type="primary">glyA</name>
    <name type="ordered locus">NMCC_0971</name>
</gene>
<sequence length="416" mass="45001">MFSKSVTLAQYDPDLAAAIAQEDQRQQDHVELIASENYVSCAVMDAQGSQLTNKYAEGYPGKRYYGGCEYVDIVEQLAIDRVKKLFGAQYANVQPHSGSQANQAVYASVLKPGDTILGMSLAHGGHLTHGASVNISGKLYNAVTYGLDENEVLDYAEVERLALEHKPKMIVAGASAYALQIDWAKFREIADKVGAYLFVDMAHYAGLVAGGEYPNPVPFCDFVTTTTHKTLRGPRGGVILCRDNTHEKALNSSIFPSLQGGPLMHVIAAKAVAFKEALQPEFKQYAKQVKINAAAMAEELVKRGLRIVSGRTESHVFLVDLQPMKITGKAAEAALGKAHITVNKNAIPNDPEKPFVTSGIRIGSAAMTTRGFNEADVRVLANLVADVLSNPEDEANLAKVREQVTALCNKYPVYGA</sequence>
<reference key="1">
    <citation type="journal article" date="2008" name="Genomics">
        <title>Characterization of ST-4821 complex, a unique Neisseria meningitidis clone.</title>
        <authorList>
            <person name="Peng J."/>
            <person name="Yang L."/>
            <person name="Yang F."/>
            <person name="Yang J."/>
            <person name="Yan Y."/>
            <person name="Nie H."/>
            <person name="Zhang X."/>
            <person name="Xiong Z."/>
            <person name="Jiang Y."/>
            <person name="Cheng F."/>
            <person name="Xu X."/>
            <person name="Chen S."/>
            <person name="Sun L."/>
            <person name="Li W."/>
            <person name="Shen Y."/>
            <person name="Shao Z."/>
            <person name="Liang X."/>
            <person name="Xu J."/>
            <person name="Jin Q."/>
        </authorList>
    </citation>
    <scope>NUCLEOTIDE SEQUENCE [LARGE SCALE GENOMIC DNA]</scope>
    <source>
        <strain>053442</strain>
    </source>
</reference>